<keyword id="KW-0025">Alternative splicing</keyword>
<keyword id="KW-0225">Disease variant</keyword>
<keyword id="KW-0256">Endoplasmic reticulum</keyword>
<keyword id="KW-0325">Glycoprotein</keyword>
<keyword id="KW-0451">Lissencephaly</keyword>
<keyword id="KW-0472">Membrane</keyword>
<keyword id="KW-0597">Phosphoprotein</keyword>
<keyword id="KW-1267">Proteomics identification</keyword>
<keyword id="KW-1185">Reference proteome</keyword>
<keyword id="KW-0677">Repeat</keyword>
<keyword id="KW-0802">TPR repeat</keyword>
<keyword id="KW-0808">Transferase</keyword>
<keyword id="KW-0812">Transmembrane</keyword>
<keyword id="KW-1133">Transmembrane helix</keyword>
<sequence length="915" mass="104009">MANINLKEITLIVGVVTACYWNSLFCGFVFDDVSAILDNKDLHPSTPLKTLFQNDFWGTPMSEERSHKSYRPLTVLTFRLNYLLSELKPMSYHLLNMIFHAVVSVIFLKVCKLFLDNKSSVIASLLFAVHPIHTEAVTGVVGRAELLSSIFFLAAFLSYTRSKGPDNSIIWTPIALTVFLVAVATLCKEQGITVVGICCVYEVFIAQGYTLPLLCTTAGQFLRGKGSIPFSMLQTLVKLIVLMFSTLLLVVIRVQVIQSQLPVFTRFDNPAAVSPTPTRQLTFNYLLPVNAWLLLNPSELCCDWTMGTIPLIESLLDIRNLATFTFFCFLGMLGVFSIRYSGDSSKTVLMALCLMALPFIPASNLFFPVGFVVAERVLYVPSMGFCILVAHGWQKISTKSVFKKLSWICLSMVILTHSLKTFHRNWDWESEYTLFMSALKVNKNNAKLWNNVGHALENEKNFERALKYFLQATHVQPDDIGAHMNVGRTYKNLNRTKEAEESYMMAKSLMPQIIPGKKYAARIAPNHLNVYINLANLIRANESRLEEADQLYRQAISMRPDFKQAYISRGELLLKMNKPLKAKEAYLKALELDRNNADLWYNLAIVHIELKEPNEALKKNFNRALELNPKHKLALFNSAIVMQESGEVKLRPEARKRLLSYINEEPLDANGYFNLGMLAMDDKKDNEAEIWMKKAIKLQADFRSALFNLALLYSQTAKELKALPILEELLRYYPDHIKGLILKGDILMNQKKDILGAKKCFERILEMDPSNVQGKHNLCVVYFEEKDLLKAERCLLETLALAPHEEYIQRHLNIVRDKISSSSFIEPIFPTSKISSVEGKKIPTESVKEIRGESRQTQIVKTSDNKSQSKSNKQLGKNGDEETPHKTTKDIKEIEKKRVAALKRLEEIERILNGE</sequence>
<accession>Q6ZXV5</accession>
<accession>Q5CZ86</accession>
<accession>Q5H9T6</accession>
<accession>Q68DQ6</accession>
<accession>Q68DX0</accession>
<accession>Q7Z332</accession>
<accession>Q8NC50</accession>
<feature type="chain" id="PRO_0000280293" description="Protein O-mannosyl-transferase TMTC3">
    <location>
        <begin position="1"/>
        <end position="915"/>
    </location>
</feature>
<feature type="topological domain" description="Cytoplasmic" evidence="12">
    <location>
        <begin position="1"/>
        <end position="8"/>
    </location>
</feature>
<feature type="transmembrane region" description="Helical" evidence="1">
    <location>
        <begin position="9"/>
        <end position="29"/>
    </location>
</feature>
<feature type="topological domain" description="Extracellular" evidence="12">
    <location>
        <begin position="30"/>
        <end position="93"/>
    </location>
</feature>
<feature type="transmembrane region" description="Helical" evidence="1">
    <location>
        <begin position="94"/>
        <end position="114"/>
    </location>
</feature>
<feature type="topological domain" description="Cytoplasmic" evidence="12">
    <location>
        <begin position="115"/>
        <end position="120"/>
    </location>
</feature>
<feature type="transmembrane region" description="Helical" evidence="1">
    <location>
        <begin position="121"/>
        <end position="139"/>
    </location>
</feature>
<feature type="transmembrane region" description="Helical" evidence="1">
    <location>
        <begin position="140"/>
        <end position="158"/>
    </location>
</feature>
<feature type="topological domain" description="Cytoplasmic" evidence="12">
    <location>
        <begin position="159"/>
        <end position="166"/>
    </location>
</feature>
<feature type="transmembrane region" description="Helical" evidence="1">
    <location>
        <begin position="167"/>
        <end position="187"/>
    </location>
</feature>
<feature type="topological domain" description="Extracellular" evidence="12">
    <location>
        <begin position="188"/>
        <end position="193"/>
    </location>
</feature>
<feature type="transmembrane region" description="Helical" evidence="1">
    <location>
        <begin position="194"/>
        <end position="214"/>
    </location>
</feature>
<feature type="topological domain" description="Cytoplasmic" evidence="12">
    <location>
        <begin position="215"/>
        <end position="231"/>
    </location>
</feature>
<feature type="transmembrane region" description="Helical" evidence="1">
    <location>
        <begin position="232"/>
        <end position="252"/>
    </location>
</feature>
<feature type="topological domain" description="Extracellular" evidence="12">
    <location>
        <begin position="253"/>
        <end position="317"/>
    </location>
</feature>
<feature type="transmembrane region" description="Helical" evidence="1">
    <location>
        <begin position="318"/>
        <end position="338"/>
    </location>
</feature>
<feature type="topological domain" description="Cytoplasmic" evidence="12">
    <location>
        <begin position="339"/>
        <end position="353"/>
    </location>
</feature>
<feature type="transmembrane region" description="Helical" evidence="1">
    <location>
        <begin position="354"/>
        <end position="374"/>
    </location>
</feature>
<feature type="topological domain" description="Extracellular" evidence="12">
    <location>
        <begin position="375"/>
        <end position="376"/>
    </location>
</feature>
<feature type="transmembrane region" description="Helical" evidence="1">
    <location>
        <begin position="377"/>
        <end position="397"/>
    </location>
</feature>
<feature type="topological domain" description="Cytoplasmic" evidence="12">
    <location>
        <begin position="398"/>
        <end position="404"/>
    </location>
</feature>
<feature type="transmembrane region" description="Helical" evidence="1">
    <location>
        <begin position="405"/>
        <end position="423"/>
    </location>
</feature>
<feature type="topological domain" description="Extracellular" evidence="12">
    <location>
        <begin position="424"/>
        <end position="915"/>
    </location>
</feature>
<feature type="repeat" description="TPR 1" evidence="2">
    <location>
        <begin position="446"/>
        <end position="479"/>
    </location>
</feature>
<feature type="repeat" description="TPR 2" evidence="2">
    <location>
        <begin position="480"/>
        <end position="513"/>
    </location>
</feature>
<feature type="repeat" description="TPR 3" evidence="2">
    <location>
        <begin position="529"/>
        <end position="562"/>
    </location>
</feature>
<feature type="repeat" description="TPR 4" evidence="2">
    <location>
        <begin position="563"/>
        <end position="596"/>
    </location>
</feature>
<feature type="repeat" description="TPR 5" evidence="2">
    <location>
        <begin position="597"/>
        <end position="631"/>
    </location>
</feature>
<feature type="repeat" description="TPR 6" evidence="2">
    <location>
        <begin position="669"/>
        <end position="702"/>
    </location>
</feature>
<feature type="repeat" description="TPR 7" evidence="2">
    <location>
        <begin position="703"/>
        <end position="736"/>
    </location>
</feature>
<feature type="repeat" description="TPR 8" evidence="2">
    <location>
        <begin position="738"/>
        <end position="771"/>
    </location>
</feature>
<feature type="repeat" description="TPR 9" evidence="2">
    <location>
        <begin position="772"/>
        <end position="805"/>
    </location>
</feature>
<feature type="region of interest" description="Disordered" evidence="4">
    <location>
        <begin position="848"/>
        <end position="892"/>
    </location>
</feature>
<feature type="compositionally biased region" description="Low complexity" evidence="4">
    <location>
        <begin position="865"/>
        <end position="874"/>
    </location>
</feature>
<feature type="compositionally biased region" description="Basic and acidic residues" evidence="4">
    <location>
        <begin position="878"/>
        <end position="892"/>
    </location>
</feature>
<feature type="modified residue" description="Phosphotyrosine" evidence="14">
    <location>
        <position position="503"/>
    </location>
</feature>
<feature type="glycosylation site" description="N-linked (GlcNAc...) asparagine" evidence="3">
    <location>
        <position position="494"/>
    </location>
</feature>
<feature type="glycosylation site" description="N-linked (GlcNAc...) asparagine" evidence="3">
    <location>
        <position position="541"/>
    </location>
</feature>
<feature type="glycosylation site" description="N-linked (GlcNAc...) asparagine" evidence="3">
    <location>
        <position position="865"/>
    </location>
</feature>
<feature type="splice variant" id="VSP_023619" description="In isoform 2." evidence="8 9 10 11">
    <location>
        <position position="618"/>
    </location>
</feature>
<feature type="sequence variant" id="VAR_077900" description="In LIS8." evidence="6">
    <original>H</original>
    <variation>D</variation>
    <location>
        <position position="67"/>
    </location>
</feature>
<feature type="sequence variant" id="VAR_077901" description="In LIS8." evidence="6">
    <original>G</original>
    <variation>E</variation>
    <location>
        <position position="384"/>
    </location>
</feature>
<feature type="sequence conflict" description="In Ref. 2; CAH18164." evidence="12" ref="2">
    <original>S</original>
    <variation>R</variation>
    <location>
        <position position="120"/>
    </location>
</feature>
<feature type="sequence conflict" description="In Ref. 3; BAC11325." evidence="12" ref="3">
    <original>S</original>
    <variation>P</variation>
    <location>
        <position position="158"/>
    </location>
</feature>
<feature type="sequence conflict" description="In Ref. 3; BAC11325." evidence="12" ref="3">
    <original>Y</original>
    <variation>C</variation>
    <location>
        <position position="201"/>
    </location>
</feature>
<feature type="sequence conflict" description="In Ref. 2; CAD98046." evidence="12" ref="2">
    <original>V</original>
    <variation>G</variation>
    <location>
        <position position="348"/>
    </location>
</feature>
<feature type="sequence conflict" description="In Ref. 2; CAH18100." evidence="12" ref="2">
    <original>T</original>
    <variation>A</variation>
    <location>
        <position position="489"/>
    </location>
</feature>
<feature type="sequence conflict" description="In Ref. 2; CAI45938." evidence="12" ref="2">
    <original>I</original>
    <variation>V</variation>
    <location>
        <position position="538"/>
    </location>
</feature>
<feature type="sequence conflict" description="In Ref. 2; CAD98046." evidence="12" ref="2">
    <original>A</original>
    <variation>V</variation>
    <location>
        <position position="639"/>
    </location>
</feature>
<feature type="sequence conflict" description="In Ref. 2; CAD98046." evidence="12" ref="2">
    <original>D</original>
    <variation>N</variation>
    <location>
        <position position="864"/>
    </location>
</feature>
<feature type="sequence conflict" description="In Ref. 2; CAD98046." evidence="12" ref="2">
    <original>T</original>
    <variation>A</variation>
    <location>
        <position position="883"/>
    </location>
</feature>
<proteinExistence type="evidence at protein level"/>
<organism>
    <name type="scientific">Homo sapiens</name>
    <name type="common">Human</name>
    <dbReference type="NCBI Taxonomy" id="9606"/>
    <lineage>
        <taxon>Eukaryota</taxon>
        <taxon>Metazoa</taxon>
        <taxon>Chordata</taxon>
        <taxon>Craniata</taxon>
        <taxon>Vertebrata</taxon>
        <taxon>Euteleostomi</taxon>
        <taxon>Mammalia</taxon>
        <taxon>Eutheria</taxon>
        <taxon>Euarchontoglires</taxon>
        <taxon>Primates</taxon>
        <taxon>Haplorrhini</taxon>
        <taxon>Catarrhini</taxon>
        <taxon>Hominidae</taxon>
        <taxon>Homo</taxon>
    </lineage>
</organism>
<evidence type="ECO:0000255" key="1"/>
<evidence type="ECO:0000255" key="2">
    <source>
        <dbReference type="PROSITE-ProRule" id="PRU00339"/>
    </source>
</evidence>
<evidence type="ECO:0000255" key="3">
    <source>
        <dbReference type="PROSITE-ProRule" id="PRU00498"/>
    </source>
</evidence>
<evidence type="ECO:0000256" key="4">
    <source>
        <dbReference type="SAM" id="MobiDB-lite"/>
    </source>
</evidence>
<evidence type="ECO:0000269" key="5">
    <source>
    </source>
</evidence>
<evidence type="ECO:0000269" key="6">
    <source>
    </source>
</evidence>
<evidence type="ECO:0000269" key="7">
    <source>
    </source>
</evidence>
<evidence type="ECO:0000303" key="8">
    <source>
    </source>
</evidence>
<evidence type="ECO:0000303" key="9">
    <source>
    </source>
</evidence>
<evidence type="ECO:0000303" key="10">
    <source>
    </source>
</evidence>
<evidence type="ECO:0000303" key="11">
    <source ref="1"/>
</evidence>
<evidence type="ECO:0000305" key="12"/>
<evidence type="ECO:0000312" key="13">
    <source>
        <dbReference type="HGNC" id="HGNC:26899"/>
    </source>
</evidence>
<evidence type="ECO:0007744" key="14">
    <source>
    </source>
</evidence>
<name>TMTC3_HUMAN</name>
<comment type="function">
    <text evidence="5 7">Transfers mannosyl residues to the hydroxyl group of serine or threonine residues. The 4 members of the TMTC family are O-mannosyl-transferases dedicated primarily to the cadherin superfamily, each member seems to have a distinct role in decorating the cadherin domains with O-linked mannose glycans at specific regions. Also acts as O-mannosyl-transferase on other proteins such as PDIA3 (PubMed:28973932). Involved in the positive regulation of proteasomal protein degradation in the endoplasmic reticulum (ER), and the control of ER stress response.</text>
</comment>
<comment type="catalytic activity">
    <reaction evidence="7">
        <text>a di-trans,poly-cis-dolichyl beta-D-mannosyl phosphate + L-seryl-[protein] = 3-O-(alpha-D-mannosyl)-L-seryl-[protein] + a di-trans,poly-cis-dolichyl phosphate + H(+)</text>
        <dbReference type="Rhea" id="RHEA:17377"/>
        <dbReference type="Rhea" id="RHEA-COMP:9863"/>
        <dbReference type="Rhea" id="RHEA-COMP:13546"/>
        <dbReference type="Rhea" id="RHEA-COMP:19498"/>
        <dbReference type="Rhea" id="RHEA-COMP:19501"/>
        <dbReference type="ChEBI" id="CHEBI:15378"/>
        <dbReference type="ChEBI" id="CHEBI:29999"/>
        <dbReference type="ChEBI" id="CHEBI:57683"/>
        <dbReference type="ChEBI" id="CHEBI:58211"/>
        <dbReference type="ChEBI" id="CHEBI:137321"/>
        <dbReference type="EC" id="2.4.1.109"/>
    </reaction>
    <physiologicalReaction direction="left-to-right" evidence="7">
        <dbReference type="Rhea" id="RHEA:17378"/>
    </physiologicalReaction>
</comment>
<comment type="catalytic activity">
    <reaction evidence="7">
        <text>a di-trans,poly-cis-dolichyl beta-D-mannosyl phosphate + L-threonyl-[protein] = 3-O-(alpha-D-mannosyl)-L-threonyl-[protein] + a di-trans,poly-cis-dolichyl phosphate + H(+)</text>
        <dbReference type="Rhea" id="RHEA:53396"/>
        <dbReference type="Rhea" id="RHEA-COMP:11060"/>
        <dbReference type="Rhea" id="RHEA-COMP:13547"/>
        <dbReference type="Rhea" id="RHEA-COMP:19498"/>
        <dbReference type="Rhea" id="RHEA-COMP:19501"/>
        <dbReference type="ChEBI" id="CHEBI:15378"/>
        <dbReference type="ChEBI" id="CHEBI:30013"/>
        <dbReference type="ChEBI" id="CHEBI:57683"/>
        <dbReference type="ChEBI" id="CHEBI:58211"/>
        <dbReference type="ChEBI" id="CHEBI:137323"/>
        <dbReference type="EC" id="2.4.1.109"/>
    </reaction>
    <physiologicalReaction direction="left-to-right" evidence="7">
        <dbReference type="Rhea" id="RHEA:53397"/>
    </physiologicalReaction>
</comment>
<comment type="pathway">
    <text evidence="7">Protein modification; protein glycosylation.</text>
</comment>
<comment type="interaction">
    <interactant intactId="EBI-10188441">
        <id>Q6ZXV5</id>
    </interactant>
    <interactant intactId="EBI-7875264">
        <id>O75553</id>
        <label>DAB1</label>
    </interactant>
    <organismsDiffer>false</organismsDiffer>
    <experiments>3</experiments>
</comment>
<comment type="subcellular location">
    <subcellularLocation>
        <location evidence="1">Membrane</location>
        <topology evidence="1">Multi-pass membrane protein</topology>
    </subcellularLocation>
    <subcellularLocation>
        <location evidence="5">Endoplasmic reticulum</location>
    </subcellularLocation>
    <text evidence="5">In odontoblast cultures, it colocalizes with PDIA3 in the endoplasmic reticulum.</text>
</comment>
<comment type="alternative products">
    <event type="alternative splicing"/>
    <isoform>
        <id>Q6ZXV5-1</id>
        <name>1</name>
        <sequence type="displayed"/>
    </isoform>
    <isoform>
        <id>Q6ZXV5-2</id>
        <name>2</name>
        <sequence type="described" ref="VSP_023619"/>
    </isoform>
</comment>
<comment type="disease" evidence="6">
    <disease id="DI-04891">
        <name>Lissencephaly 8</name>
        <acronym>LIS8</acronym>
        <description>A form of lissencephaly, a disorder of cortical development characterized by agyria or pachygyria and disorganization of the clear neuronal lamination of normal six-layered cortex. LIS8 patients manifest delayed psychomotor development, intellectual disability with poor or absent speech, early-onset refractory seizures, hypotonia, cortical gyral abnormalities, and hypoplasia of the corpus callosum, brainstem and cerebellum. LIS8 inheritance is autosomal recessive.</description>
        <dbReference type="MIM" id="617255"/>
    </disease>
    <text>The disease is caused by variants affecting the gene represented in this entry.</text>
</comment>
<comment type="similarity">
    <text evidence="12">Belongs to the TMTC family.</text>
</comment>
<comment type="sequence caution" evidence="12">
    <conflict type="erroneous initiation">
        <sequence resource="EMBL-CDS" id="BAC11325"/>
    </conflict>
    <text>Truncated N-terminus.</text>
</comment>
<reference key="1">
    <citation type="submission" date="2004-04" db="EMBL/GenBank/DDBJ databases">
        <title>SMILE, a new gene expressed by human odontoblasts.</title>
        <authorList>
            <person name="Bleicher F."/>
            <person name="Heidet E."/>
            <person name="Carrouel F."/>
            <person name="Couble M.L."/>
            <person name="Magloire H."/>
        </authorList>
    </citation>
    <scope>NUCLEOTIDE SEQUENCE [MRNA] (ISOFORM 2)</scope>
    <source>
        <tissue>Tooth</tissue>
    </source>
</reference>
<reference key="2">
    <citation type="journal article" date="2007" name="BMC Genomics">
        <title>The full-ORF clone resource of the German cDNA consortium.</title>
        <authorList>
            <person name="Bechtel S."/>
            <person name="Rosenfelder H."/>
            <person name="Duda A."/>
            <person name="Schmidt C.P."/>
            <person name="Ernst U."/>
            <person name="Wellenreuther R."/>
            <person name="Mehrle A."/>
            <person name="Schuster C."/>
            <person name="Bahr A."/>
            <person name="Bloecker H."/>
            <person name="Heubner D."/>
            <person name="Hoerlein A."/>
            <person name="Michel G."/>
            <person name="Wedler H."/>
            <person name="Koehrer K."/>
            <person name="Ottenwaelder B."/>
            <person name="Poustka A."/>
            <person name="Wiemann S."/>
            <person name="Schupp I."/>
        </authorList>
    </citation>
    <scope>NUCLEOTIDE SEQUENCE [LARGE SCALE MRNA] (ISOFORMS 1 AND 2)</scope>
    <source>
        <tissue>Amygdala</tissue>
        <tissue>Endometrial tumor</tissue>
        <tissue>Uterine endothelium</tissue>
        <tissue>Uterus</tissue>
    </source>
</reference>
<reference key="3">
    <citation type="journal article" date="2004" name="Genome Res.">
        <title>The status, quality, and expansion of the NIH full-length cDNA project: the Mammalian Gene Collection (MGC).</title>
        <authorList>
            <consortium name="The MGC Project Team"/>
        </authorList>
    </citation>
    <scope>NUCLEOTIDE SEQUENCE [LARGE SCALE MRNA] (ISOFORM 2)</scope>
    <source>
        <tissue>Colon</tissue>
    </source>
</reference>
<reference key="4">
    <citation type="journal article" date="2004" name="Nat. Genet.">
        <title>Complete sequencing and characterization of 21,243 full-length human cDNAs.</title>
        <authorList>
            <person name="Ota T."/>
            <person name="Suzuki Y."/>
            <person name="Nishikawa T."/>
            <person name="Otsuki T."/>
            <person name="Sugiyama T."/>
            <person name="Irie R."/>
            <person name="Wakamatsu A."/>
            <person name="Hayashi K."/>
            <person name="Sato H."/>
            <person name="Nagai K."/>
            <person name="Kimura K."/>
            <person name="Makita H."/>
            <person name="Sekine M."/>
            <person name="Obayashi M."/>
            <person name="Nishi T."/>
            <person name="Shibahara T."/>
            <person name="Tanaka T."/>
            <person name="Ishii S."/>
            <person name="Yamamoto J."/>
            <person name="Saito K."/>
            <person name="Kawai Y."/>
            <person name="Isono Y."/>
            <person name="Nakamura Y."/>
            <person name="Nagahari K."/>
            <person name="Murakami K."/>
            <person name="Yasuda T."/>
            <person name="Iwayanagi T."/>
            <person name="Wagatsuma M."/>
            <person name="Shiratori A."/>
            <person name="Sudo H."/>
            <person name="Hosoiri T."/>
            <person name="Kaku Y."/>
            <person name="Kodaira H."/>
            <person name="Kondo H."/>
            <person name="Sugawara M."/>
            <person name="Takahashi M."/>
            <person name="Kanda K."/>
            <person name="Yokoi T."/>
            <person name="Furuya T."/>
            <person name="Kikkawa E."/>
            <person name="Omura Y."/>
            <person name="Abe K."/>
            <person name="Kamihara K."/>
            <person name="Katsuta N."/>
            <person name="Sato K."/>
            <person name="Tanikawa M."/>
            <person name="Yamazaki M."/>
            <person name="Ninomiya K."/>
            <person name="Ishibashi T."/>
            <person name="Yamashita H."/>
            <person name="Murakawa K."/>
            <person name="Fujimori K."/>
            <person name="Tanai H."/>
            <person name="Kimata M."/>
            <person name="Watanabe M."/>
            <person name="Hiraoka S."/>
            <person name="Chiba Y."/>
            <person name="Ishida S."/>
            <person name="Ono Y."/>
            <person name="Takiguchi S."/>
            <person name="Watanabe S."/>
            <person name="Yosida M."/>
            <person name="Hotuta T."/>
            <person name="Kusano J."/>
            <person name="Kanehori K."/>
            <person name="Takahashi-Fujii A."/>
            <person name="Hara H."/>
            <person name="Tanase T.-O."/>
            <person name="Nomura Y."/>
            <person name="Togiya S."/>
            <person name="Komai F."/>
            <person name="Hara R."/>
            <person name="Takeuchi K."/>
            <person name="Arita M."/>
            <person name="Imose N."/>
            <person name="Musashino K."/>
            <person name="Yuuki H."/>
            <person name="Oshima A."/>
            <person name="Sasaki N."/>
            <person name="Aotsuka S."/>
            <person name="Yoshikawa Y."/>
            <person name="Matsunawa H."/>
            <person name="Ichihara T."/>
            <person name="Shiohata N."/>
            <person name="Sano S."/>
            <person name="Moriya S."/>
            <person name="Momiyama H."/>
            <person name="Satoh N."/>
            <person name="Takami S."/>
            <person name="Terashima Y."/>
            <person name="Suzuki O."/>
            <person name="Nakagawa S."/>
            <person name="Senoh A."/>
            <person name="Mizoguchi H."/>
            <person name="Goto Y."/>
            <person name="Shimizu F."/>
            <person name="Wakebe H."/>
            <person name="Hishigaki H."/>
            <person name="Watanabe T."/>
            <person name="Sugiyama A."/>
            <person name="Takemoto M."/>
            <person name="Kawakami B."/>
            <person name="Yamazaki M."/>
            <person name="Watanabe K."/>
            <person name="Kumagai A."/>
            <person name="Itakura S."/>
            <person name="Fukuzumi Y."/>
            <person name="Fujimori Y."/>
            <person name="Komiyama M."/>
            <person name="Tashiro H."/>
            <person name="Tanigami A."/>
            <person name="Fujiwara T."/>
            <person name="Ono T."/>
            <person name="Yamada K."/>
            <person name="Fujii Y."/>
            <person name="Ozaki K."/>
            <person name="Hirao M."/>
            <person name="Ohmori Y."/>
            <person name="Kawabata A."/>
            <person name="Hikiji T."/>
            <person name="Kobatake N."/>
            <person name="Inagaki H."/>
            <person name="Ikema Y."/>
            <person name="Okamoto S."/>
            <person name="Okitani R."/>
            <person name="Kawakami T."/>
            <person name="Noguchi S."/>
            <person name="Itoh T."/>
            <person name="Shigeta K."/>
            <person name="Senba T."/>
            <person name="Matsumura K."/>
            <person name="Nakajima Y."/>
            <person name="Mizuno T."/>
            <person name="Morinaga M."/>
            <person name="Sasaki M."/>
            <person name="Togashi T."/>
            <person name="Oyama M."/>
            <person name="Hata H."/>
            <person name="Watanabe M."/>
            <person name="Komatsu T."/>
            <person name="Mizushima-Sugano J."/>
            <person name="Satoh T."/>
            <person name="Shirai Y."/>
            <person name="Takahashi Y."/>
            <person name="Nakagawa K."/>
            <person name="Okumura K."/>
            <person name="Nagase T."/>
            <person name="Nomura N."/>
            <person name="Kikuchi H."/>
            <person name="Masuho Y."/>
            <person name="Yamashita R."/>
            <person name="Nakai K."/>
            <person name="Yada T."/>
            <person name="Nakamura Y."/>
            <person name="Ohara O."/>
            <person name="Isogai T."/>
            <person name="Sugano S."/>
        </authorList>
    </citation>
    <scope>NUCLEOTIDE SEQUENCE [LARGE SCALE MRNA] OF 52-876 (ISOFORM 2)</scope>
    <source>
        <tissue>Teratocarcinoma</tissue>
    </source>
</reference>
<reference key="5">
    <citation type="journal article" date="2008" name="Proc. Natl. Acad. Sci. U.S.A.">
        <title>A quantitative atlas of mitotic phosphorylation.</title>
        <authorList>
            <person name="Dephoure N."/>
            <person name="Zhou C."/>
            <person name="Villen J."/>
            <person name="Beausoleil S.A."/>
            <person name="Bakalarski C.E."/>
            <person name="Elledge S.J."/>
            <person name="Gygi S.P."/>
        </authorList>
    </citation>
    <scope>PHOSPHORYLATION [LARGE SCALE ANALYSIS] AT TYR-503</scope>
    <scope>IDENTIFICATION BY MASS SPECTROMETRY [LARGE SCALE ANALYSIS]</scope>
    <source>
        <tissue>Cervix carcinoma</tissue>
    </source>
</reference>
<reference key="6">
    <citation type="journal article" date="2011" name="PLoS ONE">
        <title>The involvement of SMILE/TMTC3 in endoplasmic reticulum stress response.</title>
        <authorList>
            <person name="Racape M."/>
            <person name="Duong Van Huyen J.P."/>
            <person name="Danger R."/>
            <person name="Giral M."/>
            <person name="Bleicher F."/>
            <person name="Foucher Y."/>
            <person name="Pallier A."/>
            <person name="Pilet P."/>
            <person name="Tafelmeyer P."/>
            <person name="Ashton-Chess J."/>
            <person name="Dugast E."/>
            <person name="Pettre S."/>
            <person name="Charreau B."/>
            <person name="Soulillou J.P."/>
            <person name="Brouard S."/>
        </authorList>
    </citation>
    <scope>FUNCTION</scope>
    <scope>SUBCELLULAR LOCATION</scope>
</reference>
<reference key="7">
    <citation type="journal article" date="2017" name="Proc. Natl. Acad. Sci. U.S.A.">
        <title>Discovery of an O-mannosylation pathway selectively serving cadherins and protocadherins.</title>
        <authorList>
            <person name="Larsen I.S.B."/>
            <person name="Narimatsu Y."/>
            <person name="Joshi H.J."/>
            <person name="Siukstaite L."/>
            <person name="Harrison O.J."/>
            <person name="Brasch J."/>
            <person name="Goodman K.M."/>
            <person name="Hansen L."/>
            <person name="Shapiro L."/>
            <person name="Honig B."/>
            <person name="Vakhrushev S.Y."/>
            <person name="Clausen H."/>
            <person name="Halim A."/>
        </authorList>
    </citation>
    <scope>FUNCTION</scope>
    <scope>CATALYTIC ACTIVITY</scope>
    <scope>PATHWAY</scope>
</reference>
<reference key="8">
    <citation type="journal article" date="2016" name="Am. J. Hum. Genet.">
        <title>Biallelic mutations in TMTC3, encoding a transmembrane and TPR-containing protein, lead to cobblestone lissencephaly.</title>
        <authorList>
            <person name="Jerber J."/>
            <person name="Zaki M.S."/>
            <person name="Al-Aama J.Y."/>
            <person name="Rosti R.O."/>
            <person name="Ben-Omran T."/>
            <person name="Dikoglu E."/>
            <person name="Silhavy J.L."/>
            <person name="Caglar C."/>
            <person name="Musaev D."/>
            <person name="Albrecht B."/>
            <person name="Campbell K.P."/>
            <person name="Willer T."/>
            <person name="Almuriekhi M."/>
            <person name="Caglayan A.O."/>
            <person name="Vajsar J."/>
            <person name="Bilguevar K."/>
            <person name="Ogur G."/>
            <person name="Abou Jamra R."/>
            <person name="Guenel M."/>
            <person name="Gleeson J.G."/>
        </authorList>
    </citation>
    <scope>INVOLVEMENT IN LIS8</scope>
    <scope>VARIANTS LIS8 ASP-67 AND GLU-384</scope>
</reference>
<gene>
    <name evidence="13" type="primary">TMTC3</name>
</gene>
<protein>
    <recommendedName>
        <fullName evidence="12">Protein O-mannosyl-transferase TMTC3</fullName>
        <ecNumber evidence="7">2.4.1.109</ecNumber>
    </recommendedName>
    <alternativeName>
        <fullName evidence="10">Protein SMILE</fullName>
    </alternativeName>
    <alternativeName>
        <fullName evidence="13">Transmembrane O-mannosyltransferase targeting cadherins 3</fullName>
    </alternativeName>
    <alternativeName>
        <fullName evidence="13">Transmembrane and tetratricopeptide repeat-containing 3</fullName>
    </alternativeName>
</protein>
<dbReference type="EC" id="2.4.1.109" evidence="7"/>
<dbReference type="EMBL" id="AJ697717">
    <property type="protein sequence ID" value="CAG26973.1"/>
    <property type="molecule type" value="mRNA"/>
</dbReference>
<dbReference type="EMBL" id="BX538169">
    <property type="protein sequence ID" value="CAD98046.1"/>
    <property type="molecule type" value="mRNA"/>
</dbReference>
<dbReference type="EMBL" id="CR749244">
    <property type="protein sequence ID" value="CAH18100.1"/>
    <property type="molecule type" value="mRNA"/>
</dbReference>
<dbReference type="EMBL" id="CR749309">
    <property type="protein sequence ID" value="CAH18164.1"/>
    <property type="molecule type" value="mRNA"/>
</dbReference>
<dbReference type="EMBL" id="CR933632">
    <property type="protein sequence ID" value="CAI45938.1"/>
    <property type="molecule type" value="mRNA"/>
</dbReference>
<dbReference type="EMBL" id="CR936640">
    <property type="protein sequence ID" value="CAI56780.1"/>
    <property type="molecule type" value="mRNA"/>
</dbReference>
<dbReference type="EMBL" id="BC117175">
    <property type="protein sequence ID" value="AAI17176.1"/>
    <property type="molecule type" value="mRNA"/>
</dbReference>
<dbReference type="EMBL" id="BC117177">
    <property type="protein sequence ID" value="AAI17178.1"/>
    <property type="molecule type" value="mRNA"/>
</dbReference>
<dbReference type="EMBL" id="AK074973">
    <property type="protein sequence ID" value="BAC11325.1"/>
    <property type="status" value="ALT_INIT"/>
    <property type="molecule type" value="mRNA"/>
</dbReference>
<dbReference type="CCDS" id="CCDS9032.1">
    <molecule id="Q6ZXV5-2"/>
</dbReference>
<dbReference type="RefSeq" id="NP_861448.2">
    <molecule id="Q6ZXV5-2"/>
    <property type="nucleotide sequence ID" value="NM_181783.4"/>
</dbReference>
<dbReference type="SMR" id="Q6ZXV5"/>
<dbReference type="BioGRID" id="127757">
    <property type="interactions" value="135"/>
</dbReference>
<dbReference type="FunCoup" id="Q6ZXV5">
    <property type="interactions" value="1687"/>
</dbReference>
<dbReference type="IntAct" id="Q6ZXV5">
    <property type="interactions" value="37"/>
</dbReference>
<dbReference type="MINT" id="Q6ZXV5"/>
<dbReference type="STRING" id="9606.ENSP00000266712"/>
<dbReference type="ChEMBL" id="CHEMBL5465323"/>
<dbReference type="TCDB" id="8.A.95.1.1">
    <property type="family name" value="the transmembrane and tpr repeat-containing protein 3 (tmtc3) family"/>
</dbReference>
<dbReference type="GlyCosmos" id="Q6ZXV5">
    <property type="glycosylation" value="5 sites, 3 glycans"/>
</dbReference>
<dbReference type="GlyGen" id="Q6ZXV5">
    <property type="glycosylation" value="7 sites, 14 N-linked glycans (2 sites), 2 O-linked glycans (3 sites)"/>
</dbReference>
<dbReference type="iPTMnet" id="Q6ZXV5"/>
<dbReference type="PhosphoSitePlus" id="Q6ZXV5"/>
<dbReference type="SwissPalm" id="Q6ZXV5"/>
<dbReference type="BioMuta" id="TMTC3"/>
<dbReference type="DMDM" id="134035047"/>
<dbReference type="jPOST" id="Q6ZXV5"/>
<dbReference type="MassIVE" id="Q6ZXV5"/>
<dbReference type="PaxDb" id="9606-ENSP00000266712"/>
<dbReference type="PeptideAtlas" id="Q6ZXV5"/>
<dbReference type="ProteomicsDB" id="68498">
    <molecule id="Q6ZXV5-1"/>
</dbReference>
<dbReference type="ProteomicsDB" id="68499">
    <molecule id="Q6ZXV5-2"/>
</dbReference>
<dbReference type="Pumba" id="Q6ZXV5"/>
<dbReference type="Antibodypedia" id="52318">
    <property type="antibodies" value="30 antibodies from 12 providers"/>
</dbReference>
<dbReference type="DNASU" id="160418"/>
<dbReference type="Ensembl" id="ENST00000266712.11">
    <molecule id="Q6ZXV5-2"/>
    <property type="protein sequence ID" value="ENSP00000266712.6"/>
    <property type="gene ID" value="ENSG00000139324.12"/>
</dbReference>
<dbReference type="GeneID" id="160418"/>
<dbReference type="KEGG" id="hsa:160418"/>
<dbReference type="MANE-Select" id="ENST00000266712.11">
    <molecule id="Q6ZXV5-2"/>
    <property type="protein sequence ID" value="ENSP00000266712.6"/>
    <property type="RefSeq nucleotide sequence ID" value="NM_181783.4"/>
    <property type="RefSeq protein sequence ID" value="NP_861448.2"/>
</dbReference>
<dbReference type="UCSC" id="uc001tau.3">
    <molecule id="Q6ZXV5-1"/>
    <property type="organism name" value="human"/>
</dbReference>
<dbReference type="AGR" id="HGNC:26899"/>
<dbReference type="CTD" id="160418"/>
<dbReference type="DisGeNET" id="160418"/>
<dbReference type="GeneCards" id="TMTC3"/>
<dbReference type="HGNC" id="HGNC:26899">
    <property type="gene designation" value="TMTC3"/>
</dbReference>
<dbReference type="HPA" id="ENSG00000139324">
    <property type="expression patterns" value="Low tissue specificity"/>
</dbReference>
<dbReference type="MalaCards" id="TMTC3"/>
<dbReference type="MIM" id="617218">
    <property type="type" value="gene"/>
</dbReference>
<dbReference type="MIM" id="617255">
    <property type="type" value="phenotype"/>
</dbReference>
<dbReference type="neXtProt" id="NX_Q6ZXV5"/>
<dbReference type="OpenTargets" id="ENSG00000139324"/>
<dbReference type="Orphanet" id="98892">
    <property type="disease" value="Periventricular nodular heterotopia"/>
</dbReference>
<dbReference type="PharmGKB" id="PA142670720"/>
<dbReference type="VEuPathDB" id="HostDB:ENSG00000139324"/>
<dbReference type="eggNOG" id="KOG1124">
    <property type="taxonomic scope" value="Eukaryota"/>
</dbReference>
<dbReference type="GeneTree" id="ENSGT00940000157538"/>
<dbReference type="HOGENOM" id="CLU_011615_1_0_1"/>
<dbReference type="InParanoid" id="Q6ZXV5"/>
<dbReference type="OMA" id="AKACFTR"/>
<dbReference type="OrthoDB" id="66906at2759"/>
<dbReference type="PAN-GO" id="Q6ZXV5">
    <property type="GO annotations" value="3 GO annotations based on evolutionary models"/>
</dbReference>
<dbReference type="PhylomeDB" id="Q6ZXV5"/>
<dbReference type="TreeFam" id="TF328339"/>
<dbReference type="PathwayCommons" id="Q6ZXV5"/>
<dbReference type="SignaLink" id="Q6ZXV5"/>
<dbReference type="UniPathway" id="UPA00378"/>
<dbReference type="BioGRID-ORCS" id="160418">
    <property type="hits" value="24 hits in 1156 CRISPR screens"/>
</dbReference>
<dbReference type="ChiTaRS" id="TMTC3">
    <property type="organism name" value="human"/>
</dbReference>
<dbReference type="GenomeRNAi" id="160418"/>
<dbReference type="Pharos" id="Q6ZXV5">
    <property type="development level" value="Tdark"/>
</dbReference>
<dbReference type="PRO" id="PR:Q6ZXV5"/>
<dbReference type="Proteomes" id="UP000005640">
    <property type="component" value="Chromosome 12"/>
</dbReference>
<dbReference type="RNAct" id="Q6ZXV5">
    <property type="molecule type" value="protein"/>
</dbReference>
<dbReference type="Bgee" id="ENSG00000139324">
    <property type="expression patterns" value="Expressed in endothelial cell and 192 other cell types or tissues"/>
</dbReference>
<dbReference type="ExpressionAtlas" id="Q6ZXV5">
    <property type="expression patterns" value="baseline and differential"/>
</dbReference>
<dbReference type="GO" id="GO:0005783">
    <property type="term" value="C:endoplasmic reticulum"/>
    <property type="evidence" value="ECO:0000314"/>
    <property type="project" value="UniProtKB"/>
</dbReference>
<dbReference type="GO" id="GO:0016020">
    <property type="term" value="C:membrane"/>
    <property type="evidence" value="ECO:0007669"/>
    <property type="project" value="UniProtKB-SubCell"/>
</dbReference>
<dbReference type="GO" id="GO:0004169">
    <property type="term" value="F:dolichyl-phosphate-mannose-protein mannosyltransferase activity"/>
    <property type="evidence" value="ECO:0000315"/>
    <property type="project" value="UniProtKB"/>
</dbReference>
<dbReference type="GO" id="GO:0000030">
    <property type="term" value="F:mannosyltransferase activity"/>
    <property type="evidence" value="ECO:0000318"/>
    <property type="project" value="GO_Central"/>
</dbReference>
<dbReference type="GO" id="GO:1901800">
    <property type="term" value="P:positive regulation of proteasomal protein catabolic process"/>
    <property type="evidence" value="ECO:0000315"/>
    <property type="project" value="UniProtKB"/>
</dbReference>
<dbReference type="GO" id="GO:0035269">
    <property type="term" value="P:protein O-linked mannosylation"/>
    <property type="evidence" value="ECO:0000315"/>
    <property type="project" value="UniProtKB"/>
</dbReference>
<dbReference type="GO" id="GO:0034976">
    <property type="term" value="P:response to endoplasmic reticulum stress"/>
    <property type="evidence" value="ECO:0000315"/>
    <property type="project" value="UniProtKB"/>
</dbReference>
<dbReference type="FunFam" id="1.25.40.10:FF:000239">
    <property type="entry name" value="Transmembrane and TPR repeat-containing protein 3"/>
    <property type="match status" value="1"/>
</dbReference>
<dbReference type="FunFam" id="1.25.40.10:FF:000528">
    <property type="entry name" value="Transmembrane and TPR repeat-containing protein 3"/>
    <property type="match status" value="1"/>
</dbReference>
<dbReference type="FunFam" id="1.25.40.10:FF:000175">
    <property type="entry name" value="transmembrane and TPR repeat-containing protein 3"/>
    <property type="match status" value="1"/>
</dbReference>
<dbReference type="Gene3D" id="1.25.40.10">
    <property type="entry name" value="Tetratricopeptide repeat domain"/>
    <property type="match status" value="4"/>
</dbReference>
<dbReference type="InterPro" id="IPR013618">
    <property type="entry name" value="TMTC_DUF1736"/>
</dbReference>
<dbReference type="InterPro" id="IPR011990">
    <property type="entry name" value="TPR-like_helical_dom_sf"/>
</dbReference>
<dbReference type="InterPro" id="IPR019734">
    <property type="entry name" value="TPR_rpt"/>
</dbReference>
<dbReference type="PANTHER" id="PTHR44395">
    <property type="match status" value="1"/>
</dbReference>
<dbReference type="PANTHER" id="PTHR44395:SF1">
    <property type="entry name" value="PROTEIN O-MANNOSYL-TRANSFERASE TMTC3"/>
    <property type="match status" value="1"/>
</dbReference>
<dbReference type="Pfam" id="PF08409">
    <property type="entry name" value="TMTC_DUF1736"/>
    <property type="match status" value="1"/>
</dbReference>
<dbReference type="Pfam" id="PF13431">
    <property type="entry name" value="TPR_17"/>
    <property type="match status" value="1"/>
</dbReference>
<dbReference type="Pfam" id="PF13181">
    <property type="entry name" value="TPR_8"/>
    <property type="match status" value="4"/>
</dbReference>
<dbReference type="SMART" id="SM00028">
    <property type="entry name" value="TPR"/>
    <property type="match status" value="9"/>
</dbReference>
<dbReference type="SUPFAM" id="SSF48452">
    <property type="entry name" value="TPR-like"/>
    <property type="match status" value="2"/>
</dbReference>
<dbReference type="PROSITE" id="PS50005">
    <property type="entry name" value="TPR"/>
    <property type="match status" value="9"/>
</dbReference>
<dbReference type="PROSITE" id="PS50293">
    <property type="entry name" value="TPR_REGION"/>
    <property type="match status" value="1"/>
</dbReference>